<keyword id="KW-0025">Alternative splicing</keyword>
<keyword id="KW-0966">Cell projection</keyword>
<keyword id="KW-0175">Coiled coil</keyword>
<keyword id="KW-0963">Cytoplasm</keyword>
<keyword id="KW-0206">Cytoskeleton</keyword>
<keyword id="KW-1185">Reference proteome</keyword>
<keyword id="KW-0677">Repeat</keyword>
<comment type="function">
    <text evidence="1">Required for ciliogenesis and for structural integrity at the ciliary tip.</text>
</comment>
<comment type="subunit">
    <text evidence="1">Interacts with CCP110 and CEP97. Interacts with ARMC9, TOGARAM1, CCDC66 and CSPP1.</text>
</comment>
<comment type="subcellular location">
    <subcellularLocation>
        <location evidence="1">Cell projection</location>
        <location evidence="1">Cilium</location>
    </subcellularLocation>
    <subcellularLocation>
        <location evidence="1">Cytoplasm</location>
        <location evidence="1">Cytoskeleton</location>
        <location evidence="1">Microtubule organizing center</location>
        <location evidence="1">Centrosome</location>
        <location evidence="1">Centriole</location>
    </subcellularLocation>
    <subcellularLocation>
        <location evidence="1">Cytoplasm</location>
        <location evidence="1">Cytoskeleton</location>
        <location evidence="1">Microtubule organizing center</location>
        <location evidence="1">Centrosome</location>
    </subcellularLocation>
    <subcellularLocation>
        <location evidence="1">Cytoplasm</location>
        <location evidence="1">Cytoskeleton</location>
        <location evidence="1">Spindle pole</location>
    </subcellularLocation>
    <text evidence="1">In interphase non-ciliated cells, localizes to the distal ends of both the mother and daughter centrioles. In ciliated cells, present at the distal end of the daughter centriole, but not on the mother centriole, and at the tip of primary cilium. Localization at the ciliary tip is also observed in motile cilia. Throughout S phase, associated with both mother and daughter centrioles in each centrosome. During metaphase and telophase, present at both spindle poles.</text>
</comment>
<comment type="alternative products">
    <event type="alternative splicing"/>
    <isoform>
        <id>D3Z8X7-1</id>
        <name>1</name>
        <sequence type="displayed"/>
    </isoform>
    <isoform>
        <id>D3Z8X7-2</id>
        <name>2</name>
        <sequence type="described" ref="VSP_058205"/>
    </isoform>
</comment>
<comment type="tissue specificity">
    <text evidence="4">Expressed predominantly in the brain. Also detected, although at much lower levels, in the heart and the liver. Within the brain, expressed in the cerebral cortex, hippocampus, cerebellum and brainstem.</text>
</comment>
<comment type="sequence caution" evidence="5">
    <conflict type="erroneous initiation">
        <sequence resource="EMBL-CDS" id="AAA99783"/>
    </conflict>
    <text>Truncated N-terminus.</text>
</comment>
<organism>
    <name type="scientific">Rattus norvegicus</name>
    <name type="common">Rat</name>
    <dbReference type="NCBI Taxonomy" id="10116"/>
    <lineage>
        <taxon>Eukaryota</taxon>
        <taxon>Metazoa</taxon>
        <taxon>Chordata</taxon>
        <taxon>Craniata</taxon>
        <taxon>Vertebrata</taxon>
        <taxon>Euteleostomi</taxon>
        <taxon>Mammalia</taxon>
        <taxon>Eutheria</taxon>
        <taxon>Euarchontoglires</taxon>
        <taxon>Glires</taxon>
        <taxon>Rodentia</taxon>
        <taxon>Myomorpha</taxon>
        <taxon>Muroidea</taxon>
        <taxon>Muridae</taxon>
        <taxon>Murinae</taxon>
        <taxon>Rattus</taxon>
    </lineage>
</organism>
<reference key="1">
    <citation type="journal article" date="2004" name="Nature">
        <title>Genome sequence of the Brown Norway rat yields insights into mammalian evolution.</title>
        <authorList>
            <person name="Gibbs R.A."/>
            <person name="Weinstock G.M."/>
            <person name="Metzker M.L."/>
            <person name="Muzny D.M."/>
            <person name="Sodergren E.J."/>
            <person name="Scherer S."/>
            <person name="Scott G."/>
            <person name="Steffen D."/>
            <person name="Worley K.C."/>
            <person name="Burch P.E."/>
            <person name="Okwuonu G."/>
            <person name="Hines S."/>
            <person name="Lewis L."/>
            <person name="Deramo C."/>
            <person name="Delgado O."/>
            <person name="Dugan-Rocha S."/>
            <person name="Miner G."/>
            <person name="Morgan M."/>
            <person name="Hawes A."/>
            <person name="Gill R."/>
            <person name="Holt R.A."/>
            <person name="Adams M.D."/>
            <person name="Amanatides P.G."/>
            <person name="Baden-Tillson H."/>
            <person name="Barnstead M."/>
            <person name="Chin S."/>
            <person name="Evans C.A."/>
            <person name="Ferriera S."/>
            <person name="Fosler C."/>
            <person name="Glodek A."/>
            <person name="Gu Z."/>
            <person name="Jennings D."/>
            <person name="Kraft C.L."/>
            <person name="Nguyen T."/>
            <person name="Pfannkoch C.M."/>
            <person name="Sitter C."/>
            <person name="Sutton G.G."/>
            <person name="Venter J.C."/>
            <person name="Woodage T."/>
            <person name="Smith D."/>
            <person name="Lee H.-M."/>
            <person name="Gustafson E."/>
            <person name="Cahill P."/>
            <person name="Kana A."/>
            <person name="Doucette-Stamm L."/>
            <person name="Weinstock K."/>
            <person name="Fechtel K."/>
            <person name="Weiss R.B."/>
            <person name="Dunn D.M."/>
            <person name="Green E.D."/>
            <person name="Blakesley R.W."/>
            <person name="Bouffard G.G."/>
            <person name="De Jong P.J."/>
            <person name="Osoegawa K."/>
            <person name="Zhu B."/>
            <person name="Marra M."/>
            <person name="Schein J."/>
            <person name="Bosdet I."/>
            <person name="Fjell C."/>
            <person name="Jones S."/>
            <person name="Krzywinski M."/>
            <person name="Mathewson C."/>
            <person name="Siddiqui A."/>
            <person name="Wye N."/>
            <person name="McPherson J."/>
            <person name="Zhao S."/>
            <person name="Fraser C.M."/>
            <person name="Shetty J."/>
            <person name="Shatsman S."/>
            <person name="Geer K."/>
            <person name="Chen Y."/>
            <person name="Abramzon S."/>
            <person name="Nierman W.C."/>
            <person name="Havlak P.H."/>
            <person name="Chen R."/>
            <person name="Durbin K.J."/>
            <person name="Egan A."/>
            <person name="Ren Y."/>
            <person name="Song X.-Z."/>
            <person name="Li B."/>
            <person name="Liu Y."/>
            <person name="Qin X."/>
            <person name="Cawley S."/>
            <person name="Cooney A.J."/>
            <person name="D'Souza L.M."/>
            <person name="Martin K."/>
            <person name="Wu J.Q."/>
            <person name="Gonzalez-Garay M.L."/>
            <person name="Jackson A.R."/>
            <person name="Kalafus K.J."/>
            <person name="McLeod M.P."/>
            <person name="Milosavljevic A."/>
            <person name="Virk D."/>
            <person name="Volkov A."/>
            <person name="Wheeler D.A."/>
            <person name="Zhang Z."/>
            <person name="Bailey J.A."/>
            <person name="Eichler E.E."/>
            <person name="Tuzun E."/>
            <person name="Birney E."/>
            <person name="Mongin E."/>
            <person name="Ureta-Vidal A."/>
            <person name="Woodwark C."/>
            <person name="Zdobnov E."/>
            <person name="Bork P."/>
            <person name="Suyama M."/>
            <person name="Torrents D."/>
            <person name="Alexandersson M."/>
            <person name="Trask B.J."/>
            <person name="Young J.M."/>
            <person name="Huang H."/>
            <person name="Wang H."/>
            <person name="Xing H."/>
            <person name="Daniels S."/>
            <person name="Gietzen D."/>
            <person name="Schmidt J."/>
            <person name="Stevens K."/>
            <person name="Vitt U."/>
            <person name="Wingrove J."/>
            <person name="Camara F."/>
            <person name="Mar Alba M."/>
            <person name="Abril J.F."/>
            <person name="Guigo R."/>
            <person name="Smit A."/>
            <person name="Dubchak I."/>
            <person name="Rubin E.M."/>
            <person name="Couronne O."/>
            <person name="Poliakov A."/>
            <person name="Huebner N."/>
            <person name="Ganten D."/>
            <person name="Goesele C."/>
            <person name="Hummel O."/>
            <person name="Kreitler T."/>
            <person name="Lee Y.-A."/>
            <person name="Monti J."/>
            <person name="Schulz H."/>
            <person name="Zimdahl H."/>
            <person name="Himmelbauer H."/>
            <person name="Lehrach H."/>
            <person name="Jacob H.J."/>
            <person name="Bromberg S."/>
            <person name="Gullings-Handley J."/>
            <person name="Jensen-Seaman M.I."/>
            <person name="Kwitek A.E."/>
            <person name="Lazar J."/>
            <person name="Pasko D."/>
            <person name="Tonellato P.J."/>
            <person name="Twigger S."/>
            <person name="Ponting C.P."/>
            <person name="Duarte J.M."/>
            <person name="Rice S."/>
            <person name="Goodstadt L."/>
            <person name="Beatson S.A."/>
            <person name="Emes R.D."/>
            <person name="Winter E.E."/>
            <person name="Webber C."/>
            <person name="Brandt P."/>
            <person name="Nyakatura G."/>
            <person name="Adetobi M."/>
            <person name="Chiaromonte F."/>
            <person name="Elnitski L."/>
            <person name="Eswara P."/>
            <person name="Hardison R.C."/>
            <person name="Hou M."/>
            <person name="Kolbe D."/>
            <person name="Makova K."/>
            <person name="Miller W."/>
            <person name="Nekrutenko A."/>
            <person name="Riemer C."/>
            <person name="Schwartz S."/>
            <person name="Taylor J."/>
            <person name="Yang S."/>
            <person name="Zhang Y."/>
            <person name="Lindpaintner K."/>
            <person name="Andrews T.D."/>
            <person name="Caccamo M."/>
            <person name="Clamp M."/>
            <person name="Clarke L."/>
            <person name="Curwen V."/>
            <person name="Durbin R.M."/>
            <person name="Eyras E."/>
            <person name="Searle S.M."/>
            <person name="Cooper G.M."/>
            <person name="Batzoglou S."/>
            <person name="Brudno M."/>
            <person name="Sidow A."/>
            <person name="Stone E.A."/>
            <person name="Payseur B.A."/>
            <person name="Bourque G."/>
            <person name="Lopez-Otin C."/>
            <person name="Puente X.S."/>
            <person name="Chakrabarti K."/>
            <person name="Chatterji S."/>
            <person name="Dewey C."/>
            <person name="Pachter L."/>
            <person name="Bray N."/>
            <person name="Yap V.B."/>
            <person name="Caspi A."/>
            <person name="Tesler G."/>
            <person name="Pevzner P.A."/>
            <person name="Haussler D."/>
            <person name="Roskin K.M."/>
            <person name="Baertsch R."/>
            <person name="Clawson H."/>
            <person name="Furey T.S."/>
            <person name="Hinrichs A.S."/>
            <person name="Karolchik D."/>
            <person name="Kent W.J."/>
            <person name="Rosenbloom K.R."/>
            <person name="Trumbower H."/>
            <person name="Weirauch M."/>
            <person name="Cooper D.N."/>
            <person name="Stenson P.D."/>
            <person name="Ma B."/>
            <person name="Brent M."/>
            <person name="Arumugam M."/>
            <person name="Shteynberg D."/>
            <person name="Copley R.R."/>
            <person name="Taylor M.S."/>
            <person name="Riethman H."/>
            <person name="Mudunuri U."/>
            <person name="Peterson J."/>
            <person name="Guyer M."/>
            <person name="Felsenfeld A."/>
            <person name="Old S."/>
            <person name="Mockrin S."/>
            <person name="Collins F.S."/>
        </authorList>
    </citation>
    <scope>NUCLEOTIDE SEQUENCE [LARGE SCALE GENOMIC DNA]</scope>
    <source>
        <strain>Brown Norway</strain>
    </source>
</reference>
<reference key="2">
    <citation type="journal article" date="1995" name="Biochem. Biophys. Res. Commun.">
        <title>Cloning of the cDNA for a brain glycine-, glutamate- and thienylcyclohexylpiperidine-binding protein.</title>
        <authorList>
            <person name="Kumar K.N."/>
            <person name="Babcock K.K."/>
            <person name="Johnson P.S."/>
            <person name="Chen X."/>
            <person name="Ahmad M."/>
            <person name="Michaelis E.K."/>
        </authorList>
    </citation>
    <scope>NUCLEOTIDE SEQUENCE [MRNA] OF 392-922 (ISOFORM 2)</scope>
    <scope>TISSUE SPECIFICITY</scope>
    <source>
        <tissue>Hippocampus</tissue>
    </source>
</reference>
<dbReference type="EMBL" id="AABR07050617">
    <property type="status" value="NOT_ANNOTATED_CDS"/>
    <property type="molecule type" value="Genomic_DNA"/>
</dbReference>
<dbReference type="EMBL" id="U53513">
    <property type="protein sequence ID" value="AAA99783.1"/>
    <property type="status" value="ALT_INIT"/>
    <property type="molecule type" value="mRNA"/>
</dbReference>
<dbReference type="RefSeq" id="NP_659550.2">
    <property type="nucleotide sequence ID" value="NM_145082.2"/>
</dbReference>
<dbReference type="SMR" id="D3Z8X7"/>
<dbReference type="FunCoup" id="D3Z8X7">
    <property type="interactions" value="2882"/>
</dbReference>
<dbReference type="STRING" id="10116.ENSRNOP00000034972"/>
<dbReference type="iPTMnet" id="D3Z8X7"/>
<dbReference type="PhosphoSitePlus" id="D3Z8X7"/>
<dbReference type="PaxDb" id="10116-ENSRNOP00000034972"/>
<dbReference type="GeneID" id="246295"/>
<dbReference type="KEGG" id="rno:246295"/>
<dbReference type="UCSC" id="RGD:708505">
    <property type="organism name" value="rat"/>
</dbReference>
<dbReference type="AGR" id="RGD:708505"/>
<dbReference type="CTD" id="9731"/>
<dbReference type="RGD" id="708505">
    <property type="gene designation" value="Cep104"/>
</dbReference>
<dbReference type="VEuPathDB" id="HostDB:ENSRNOG00000025000"/>
<dbReference type="eggNOG" id="KOG4825">
    <property type="taxonomic scope" value="Eukaryota"/>
</dbReference>
<dbReference type="HOGENOM" id="CLU_003200_0_0_1"/>
<dbReference type="InParanoid" id="D3Z8X7"/>
<dbReference type="TreeFam" id="TF323766"/>
<dbReference type="PRO" id="PR:D3Z8X7"/>
<dbReference type="Proteomes" id="UP000002494">
    <property type="component" value="Chromosome 5"/>
</dbReference>
<dbReference type="Bgee" id="ENSRNOG00000025000">
    <property type="expression patterns" value="Expressed in testis and 19 other cell types or tissues"/>
</dbReference>
<dbReference type="ExpressionAtlas" id="D3Z8X7">
    <property type="expression patterns" value="baseline and differential"/>
</dbReference>
<dbReference type="GO" id="GO:0005814">
    <property type="term" value="C:centriole"/>
    <property type="evidence" value="ECO:0000266"/>
    <property type="project" value="RGD"/>
</dbReference>
<dbReference type="GO" id="GO:0005813">
    <property type="term" value="C:centrosome"/>
    <property type="evidence" value="ECO:0007669"/>
    <property type="project" value="UniProtKB-SubCell"/>
</dbReference>
<dbReference type="GO" id="GO:0005929">
    <property type="term" value="C:cilium"/>
    <property type="evidence" value="ECO:0000266"/>
    <property type="project" value="RGD"/>
</dbReference>
<dbReference type="GO" id="GO:0005737">
    <property type="term" value="C:cytoplasm"/>
    <property type="evidence" value="ECO:0007669"/>
    <property type="project" value="UniProtKB-KW"/>
</dbReference>
<dbReference type="GO" id="GO:0000922">
    <property type="term" value="C:spindle pole"/>
    <property type="evidence" value="ECO:0007669"/>
    <property type="project" value="UniProtKB-SubCell"/>
</dbReference>
<dbReference type="GO" id="GO:0016595">
    <property type="term" value="F:glutamate binding"/>
    <property type="evidence" value="ECO:0000315"/>
    <property type="project" value="RGD"/>
</dbReference>
<dbReference type="GO" id="GO:0016594">
    <property type="term" value="F:glycine binding"/>
    <property type="evidence" value="ECO:0000315"/>
    <property type="project" value="RGD"/>
</dbReference>
<dbReference type="GO" id="GO:0016596">
    <property type="term" value="F:thienylcyclohexylpiperidine binding"/>
    <property type="evidence" value="ECO:0000315"/>
    <property type="project" value="RGD"/>
</dbReference>
<dbReference type="FunFam" id="1.25.10.10:FF:000200">
    <property type="entry name" value="Centrosomal protein of 104 kDa"/>
    <property type="match status" value="1"/>
</dbReference>
<dbReference type="FunFam" id="3.30.40.10:FF:000378">
    <property type="entry name" value="TRAF-type zinc finger domain-containing 1"/>
    <property type="match status" value="1"/>
</dbReference>
<dbReference type="Gene3D" id="1.25.10.10">
    <property type="entry name" value="Leucine-rich Repeat Variant"/>
    <property type="match status" value="1"/>
</dbReference>
<dbReference type="Gene3D" id="3.30.40.10">
    <property type="entry name" value="Zinc/RING finger domain, C3HC4 (zinc finger)"/>
    <property type="match status" value="1"/>
</dbReference>
<dbReference type="InterPro" id="IPR011989">
    <property type="entry name" value="ARM-like"/>
</dbReference>
<dbReference type="InterPro" id="IPR016024">
    <property type="entry name" value="ARM-type_fold"/>
</dbReference>
<dbReference type="InterPro" id="IPR052607">
    <property type="entry name" value="CEP104-like"/>
</dbReference>
<dbReference type="InterPro" id="IPR048739">
    <property type="entry name" value="CEP104_N"/>
</dbReference>
<dbReference type="InterPro" id="IPR048738">
    <property type="entry name" value="CEP104_Znf"/>
</dbReference>
<dbReference type="InterPro" id="IPR008979">
    <property type="entry name" value="Galactose-bd-like_sf"/>
</dbReference>
<dbReference type="InterPro" id="IPR034085">
    <property type="entry name" value="TOG"/>
</dbReference>
<dbReference type="InterPro" id="IPR013083">
    <property type="entry name" value="Znf_RING/FYVE/PHD"/>
</dbReference>
<dbReference type="PANTHER" id="PTHR13371:SF0">
    <property type="entry name" value="CENTROSOMAL PROTEIN OF 104 KDA"/>
    <property type="match status" value="1"/>
</dbReference>
<dbReference type="PANTHER" id="PTHR13371">
    <property type="entry name" value="GLYCINE-, GLUTAMATE-, THIENYLCYCLOHEXYLPIPERIDINE-BINDING PROTEIN"/>
    <property type="match status" value="1"/>
</dbReference>
<dbReference type="Pfam" id="PF21040">
    <property type="entry name" value="CEP104-like_TOG"/>
    <property type="match status" value="1"/>
</dbReference>
<dbReference type="Pfam" id="PF21038">
    <property type="entry name" value="CEP104_N"/>
    <property type="match status" value="1"/>
</dbReference>
<dbReference type="Pfam" id="PF21039">
    <property type="entry name" value="CEP104_ZnF"/>
    <property type="match status" value="1"/>
</dbReference>
<dbReference type="SMART" id="SM01349">
    <property type="entry name" value="TOG"/>
    <property type="match status" value="1"/>
</dbReference>
<dbReference type="SUPFAM" id="SSF48371">
    <property type="entry name" value="ARM repeat"/>
    <property type="match status" value="1"/>
</dbReference>
<dbReference type="SUPFAM" id="SSF49785">
    <property type="entry name" value="Galactose-binding domain-like"/>
    <property type="match status" value="1"/>
</dbReference>
<name>CE104_RAT</name>
<gene>
    <name type="primary">Cep104</name>
</gene>
<evidence type="ECO:0000250" key="1">
    <source>
        <dbReference type="UniProtKB" id="O60308"/>
    </source>
</evidence>
<evidence type="ECO:0000255" key="2"/>
<evidence type="ECO:0000256" key="3">
    <source>
        <dbReference type="SAM" id="MobiDB-lite"/>
    </source>
</evidence>
<evidence type="ECO:0000269" key="4">
    <source>
    </source>
</evidence>
<evidence type="ECO:0000305" key="5"/>
<accession>D3Z8X7</accession>
<accession>A0A0G2JUH6</accession>
<accession>Q62965</accession>
<protein>
    <recommendedName>
        <fullName>Centrosomal protein of 104 kDa</fullName>
        <shortName>Cep104</shortName>
    </recommendedName>
    <alternativeName>
        <fullName>Glycine-, glutamate- and thienylcyclohexylpiperidine-binding protein</fullName>
        <shortName>Gly-, L-Glu and TCP-binding protein</shortName>
        <shortName>GlyBP</shortName>
    </alternativeName>
</protein>
<sequence length="922" mass="103790">MPHKIGFVVVSSSGHEDGFSARELMIHAPTVSGWRSPKFCQFPQEIVLQMVERCRIRKLQLLAHQYMISSKVEFYISESLPEYLVPYQAERFRRLGYVSLCDNEKTGCKARELKSVYVDAVGQFLKLIFHQTTNKYNVNQVALVAINIIGDPADLGDESNTTCREKLIDHYLGHSPHNPEDPALDGTFAGRSDYISPLDDLAFDMYQDPEVAQIIRRLDERKREAAKKERYDHAKKLKQAIADLQKVGERLGRYEVEKRRAVEKEDYDLAKEKKQQMARYRAQVYEQLELHGLLQGEPEMQRPFALPLQPLASPSSPQHWKAVSSLPRTEELAAEDTCAGPILQEKPLASSPRHSAVDRSPPAAGPAPRSHVEALPYDERPLPVTRKQLEEPSAEPEVREADSDVRRRGVSAEPEPLTEKALREASSAIDTLGEALVAGAYSKMWSCREDALLALYKRLMEMPVGTQKEDLKNMLRASVFLIRRAIKDIVTSVFQASLKLLKMIITQYIPKHKLGKLDTTYCVERAIPLLLARTGDSSARLRVMALNFIQEMALFKEVRSLQLIPSYLVQPLKTNASVHLAMSQVDLLARLLRDLGTEGSGFTVDNVMKFAVSALEHRVYEVRETAVRIILDMYRQHPALTLEHLPPDDSTTRRNLLYKAIFEGFAKIDGRPTEAEGKTQKRVVTKEAEKQKKEETKALQGLSAAPRETQAGVQEKENEAVKLKNQDPQGRKAAPPDTPEIPDNHYLDNLCIFCGERNESFTEEGLDLHYWKHCLMLTRCDHCRQVVEISSLTEHLLTECDKRDGFGKCPRCSEAVPKEELPRHIKTKECNPAKSEKVANRCPLCHENFAPGEEAWKVHLMGSAGCTMNLRKTHILCKAPAPQQGKGPMASKSGTSAPKVGSKIPTPKGGLSKSSSRTHTRR</sequence>
<feature type="chain" id="PRO_0000435986" description="Centrosomal protein of 104 kDa">
    <location>
        <begin position="1"/>
        <end position="922"/>
    </location>
</feature>
<feature type="repeat" description="HEAT 1">
    <location>
        <begin position="526"/>
        <end position="564"/>
    </location>
</feature>
<feature type="repeat" description="HEAT 2">
    <location>
        <begin position="601"/>
        <end position="637"/>
    </location>
</feature>
<feature type="region of interest" description="Disordered" evidence="3">
    <location>
        <begin position="307"/>
        <end position="333"/>
    </location>
</feature>
<feature type="region of interest" description="Disordered" evidence="3">
    <location>
        <begin position="348"/>
        <end position="419"/>
    </location>
</feature>
<feature type="region of interest" description="Disordered" evidence="3">
    <location>
        <begin position="673"/>
        <end position="741"/>
    </location>
</feature>
<feature type="region of interest" description="Disordered" evidence="3">
    <location>
        <begin position="880"/>
        <end position="922"/>
    </location>
</feature>
<feature type="coiled-coil region" evidence="2">
    <location>
        <begin position="210"/>
        <end position="277"/>
    </location>
</feature>
<feature type="coiled-coil region" evidence="2">
    <location>
        <begin position="678"/>
        <end position="705"/>
    </location>
</feature>
<feature type="compositionally biased region" description="Low complexity" evidence="3">
    <location>
        <begin position="307"/>
        <end position="318"/>
    </location>
</feature>
<feature type="compositionally biased region" description="Basic and acidic residues" evidence="3">
    <location>
        <begin position="396"/>
        <end position="407"/>
    </location>
</feature>
<feature type="compositionally biased region" description="Basic and acidic residues" evidence="3">
    <location>
        <begin position="673"/>
        <end position="697"/>
    </location>
</feature>
<feature type="compositionally biased region" description="Basic and acidic residues" evidence="3">
    <location>
        <begin position="714"/>
        <end position="725"/>
    </location>
</feature>
<feature type="splice variant" id="VSP_058205" description="In isoform 2.">
    <original>SKSSSRTHTRR</original>
    <variation>KS</variation>
    <location>
        <begin position="912"/>
        <end position="922"/>
    </location>
</feature>
<feature type="sequence conflict" description="In Ref. 2; AAA99783." evidence="5" ref="2">
    <original>S</original>
    <variation>T</variation>
    <location>
        <position position="393"/>
    </location>
</feature>
<feature type="sequence conflict" description="In Ref. 2; AAA99783." evidence="5" ref="2">
    <original>EDL</original>
    <variation>GFV</variation>
    <location>
        <begin position="469"/>
        <end position="471"/>
    </location>
</feature>
<proteinExistence type="evidence at transcript level"/>